<sequence>MTDKKYIIALDQGTTSSRAVLLDHNANVVEIAQREFTQIYPRAGWVEHNPMEIWATQSSTLNEVVAKAGITSDEIAAIGITNQRETTIVWEKSTGTPVYNAIVWQCRRTADITDKLKADGHEEYIRNTTGLVVDPYFSGTKVKWILDNVEGAREKAERGELLFGTVDTWLVWKLTQGRVHVTDYTNASRTMLFNIHTKQWDDKMLEILNIPRSILPEVRNSSEIYGQTNIGGKGGVRIPVAGIAGDQQAALYGHLCVHAGQAKNTYGTGCFMLLHTGNKAITSKNGLLTTIACNAKGEPEYALEGSVFIAGASIQWLRDELKTVHDSFDSEYFAQKVTDSNGVYVVPAFTGLGAPYWDPYARGAIFGLSRGANCNHIVRATLQSIAYQTRDVLEAMQSDSGERLQYLRVDGGATNNNFLMQFQADILDVNVERPVVKEVTALGAAYLAGLATGFWKDLDELRDKARVERTFSPDSDNEKRERRYKGWKKAVKRSLEWAKEDEE</sequence>
<accession>Q4QMM7</accession>
<protein>
    <recommendedName>
        <fullName evidence="1">Glycerol kinase</fullName>
        <ecNumber evidence="1">2.7.1.30</ecNumber>
    </recommendedName>
    <alternativeName>
        <fullName evidence="1">ATP:glycerol 3-phosphotransferase</fullName>
    </alternativeName>
    <alternativeName>
        <fullName evidence="1">Glycerokinase</fullName>
        <shortName evidence="1">GK</shortName>
    </alternativeName>
</protein>
<reference key="1">
    <citation type="journal article" date="2005" name="J. Bacteriol.">
        <title>Genomic sequence of an otitis media isolate of nontypeable Haemophilus influenzae: comparative study with H. influenzae serotype d, strain KW20.</title>
        <authorList>
            <person name="Harrison A."/>
            <person name="Dyer D.W."/>
            <person name="Gillaspy A."/>
            <person name="Ray W.C."/>
            <person name="Mungur R."/>
            <person name="Carson M.B."/>
            <person name="Zhong H."/>
            <person name="Gipson J."/>
            <person name="Gipson M."/>
            <person name="Johnson L.S."/>
            <person name="Lewis L."/>
            <person name="Bakaletz L.O."/>
            <person name="Munson R.S. Jr."/>
        </authorList>
    </citation>
    <scope>NUCLEOTIDE SEQUENCE [LARGE SCALE GENOMIC DNA]</scope>
    <source>
        <strain>86-028NP</strain>
    </source>
</reference>
<organism>
    <name type="scientific">Haemophilus influenzae (strain 86-028NP)</name>
    <dbReference type="NCBI Taxonomy" id="281310"/>
    <lineage>
        <taxon>Bacteria</taxon>
        <taxon>Pseudomonadati</taxon>
        <taxon>Pseudomonadota</taxon>
        <taxon>Gammaproteobacteria</taxon>
        <taxon>Pasteurellales</taxon>
        <taxon>Pasteurellaceae</taxon>
        <taxon>Haemophilus</taxon>
    </lineage>
</organism>
<comment type="function">
    <text evidence="1">Key enzyme in the regulation of glycerol uptake and metabolism. Catalyzes the phosphorylation of glycerol to yield sn-glycerol 3-phosphate.</text>
</comment>
<comment type="catalytic activity">
    <reaction evidence="1">
        <text>glycerol + ATP = sn-glycerol 3-phosphate + ADP + H(+)</text>
        <dbReference type="Rhea" id="RHEA:21644"/>
        <dbReference type="ChEBI" id="CHEBI:15378"/>
        <dbReference type="ChEBI" id="CHEBI:17754"/>
        <dbReference type="ChEBI" id="CHEBI:30616"/>
        <dbReference type="ChEBI" id="CHEBI:57597"/>
        <dbReference type="ChEBI" id="CHEBI:456216"/>
        <dbReference type="EC" id="2.7.1.30"/>
    </reaction>
</comment>
<comment type="activity regulation">
    <text evidence="1">Inhibited by fructose 1,6-bisphosphate (FBP).</text>
</comment>
<comment type="pathway">
    <text evidence="1">Polyol metabolism; glycerol degradation via glycerol kinase pathway; sn-glycerol 3-phosphate from glycerol: step 1/1.</text>
</comment>
<comment type="similarity">
    <text evidence="1">Belongs to the FGGY kinase family.</text>
</comment>
<feature type="chain" id="PRO_1000020733" description="Glycerol kinase">
    <location>
        <begin position="1"/>
        <end position="503"/>
    </location>
</feature>
<feature type="binding site" evidence="1">
    <location>
        <position position="14"/>
    </location>
    <ligand>
        <name>ADP</name>
        <dbReference type="ChEBI" id="CHEBI:456216"/>
    </ligand>
</feature>
<feature type="binding site" evidence="1">
    <location>
        <position position="14"/>
    </location>
    <ligand>
        <name>ATP</name>
        <dbReference type="ChEBI" id="CHEBI:30616"/>
    </ligand>
</feature>
<feature type="binding site" evidence="1">
    <location>
        <position position="14"/>
    </location>
    <ligand>
        <name>sn-glycerol 3-phosphate</name>
        <dbReference type="ChEBI" id="CHEBI:57597"/>
    </ligand>
</feature>
<feature type="binding site" evidence="1">
    <location>
        <position position="15"/>
    </location>
    <ligand>
        <name>ATP</name>
        <dbReference type="ChEBI" id="CHEBI:30616"/>
    </ligand>
</feature>
<feature type="binding site" evidence="1">
    <location>
        <position position="16"/>
    </location>
    <ligand>
        <name>ATP</name>
        <dbReference type="ChEBI" id="CHEBI:30616"/>
    </ligand>
</feature>
<feature type="binding site" evidence="1">
    <location>
        <position position="18"/>
    </location>
    <ligand>
        <name>ADP</name>
        <dbReference type="ChEBI" id="CHEBI:456216"/>
    </ligand>
</feature>
<feature type="binding site" evidence="1">
    <location>
        <position position="84"/>
    </location>
    <ligand>
        <name>glycerol</name>
        <dbReference type="ChEBI" id="CHEBI:17754"/>
    </ligand>
</feature>
<feature type="binding site" evidence="1">
    <location>
        <position position="84"/>
    </location>
    <ligand>
        <name>sn-glycerol 3-phosphate</name>
        <dbReference type="ChEBI" id="CHEBI:57597"/>
    </ligand>
</feature>
<feature type="binding site" evidence="1">
    <location>
        <position position="85"/>
    </location>
    <ligand>
        <name>glycerol</name>
        <dbReference type="ChEBI" id="CHEBI:17754"/>
    </ligand>
</feature>
<feature type="binding site" evidence="1">
    <location>
        <position position="85"/>
    </location>
    <ligand>
        <name>sn-glycerol 3-phosphate</name>
        <dbReference type="ChEBI" id="CHEBI:57597"/>
    </ligand>
</feature>
<feature type="binding site" evidence="1">
    <location>
        <position position="136"/>
    </location>
    <ligand>
        <name>glycerol</name>
        <dbReference type="ChEBI" id="CHEBI:17754"/>
    </ligand>
</feature>
<feature type="binding site" evidence="1">
    <location>
        <position position="136"/>
    </location>
    <ligand>
        <name>sn-glycerol 3-phosphate</name>
        <dbReference type="ChEBI" id="CHEBI:57597"/>
    </ligand>
</feature>
<feature type="binding site" evidence="1">
    <location>
        <position position="246"/>
    </location>
    <ligand>
        <name>glycerol</name>
        <dbReference type="ChEBI" id="CHEBI:17754"/>
    </ligand>
</feature>
<feature type="binding site" evidence="1">
    <location>
        <position position="246"/>
    </location>
    <ligand>
        <name>sn-glycerol 3-phosphate</name>
        <dbReference type="ChEBI" id="CHEBI:57597"/>
    </ligand>
</feature>
<feature type="binding site" evidence="1">
    <location>
        <position position="247"/>
    </location>
    <ligand>
        <name>glycerol</name>
        <dbReference type="ChEBI" id="CHEBI:17754"/>
    </ligand>
</feature>
<feature type="binding site" evidence="1">
    <location>
        <position position="268"/>
    </location>
    <ligand>
        <name>ADP</name>
        <dbReference type="ChEBI" id="CHEBI:456216"/>
    </ligand>
</feature>
<feature type="binding site" evidence="1">
    <location>
        <position position="268"/>
    </location>
    <ligand>
        <name>ATP</name>
        <dbReference type="ChEBI" id="CHEBI:30616"/>
    </ligand>
</feature>
<feature type="binding site" evidence="1">
    <location>
        <position position="311"/>
    </location>
    <ligand>
        <name>ADP</name>
        <dbReference type="ChEBI" id="CHEBI:456216"/>
    </ligand>
</feature>
<feature type="binding site" evidence="1">
    <location>
        <position position="311"/>
    </location>
    <ligand>
        <name>ATP</name>
        <dbReference type="ChEBI" id="CHEBI:30616"/>
    </ligand>
</feature>
<feature type="binding site" evidence="1">
    <location>
        <position position="315"/>
    </location>
    <ligand>
        <name>ATP</name>
        <dbReference type="ChEBI" id="CHEBI:30616"/>
    </ligand>
</feature>
<feature type="binding site" evidence="1">
    <location>
        <position position="412"/>
    </location>
    <ligand>
        <name>ADP</name>
        <dbReference type="ChEBI" id="CHEBI:456216"/>
    </ligand>
</feature>
<feature type="binding site" evidence="1">
    <location>
        <position position="412"/>
    </location>
    <ligand>
        <name>ATP</name>
        <dbReference type="ChEBI" id="CHEBI:30616"/>
    </ligand>
</feature>
<feature type="binding site" evidence="1">
    <location>
        <position position="416"/>
    </location>
    <ligand>
        <name>ADP</name>
        <dbReference type="ChEBI" id="CHEBI:456216"/>
    </ligand>
</feature>
<dbReference type="EC" id="2.7.1.30" evidence="1"/>
<dbReference type="EMBL" id="CP000057">
    <property type="protein sequence ID" value="AAX87720.1"/>
    <property type="molecule type" value="Genomic_DNA"/>
</dbReference>
<dbReference type="RefSeq" id="WP_011272170.1">
    <property type="nucleotide sequence ID" value="NC_007146.2"/>
</dbReference>
<dbReference type="SMR" id="Q4QMM7"/>
<dbReference type="GeneID" id="93219688"/>
<dbReference type="KEGG" id="hit:NTHI0813"/>
<dbReference type="HOGENOM" id="CLU_009281_2_3_6"/>
<dbReference type="UniPathway" id="UPA00618">
    <property type="reaction ID" value="UER00672"/>
</dbReference>
<dbReference type="Proteomes" id="UP000002525">
    <property type="component" value="Chromosome"/>
</dbReference>
<dbReference type="GO" id="GO:0005829">
    <property type="term" value="C:cytosol"/>
    <property type="evidence" value="ECO:0007669"/>
    <property type="project" value="TreeGrafter"/>
</dbReference>
<dbReference type="GO" id="GO:0005524">
    <property type="term" value="F:ATP binding"/>
    <property type="evidence" value="ECO:0007669"/>
    <property type="project" value="UniProtKB-UniRule"/>
</dbReference>
<dbReference type="GO" id="GO:0004370">
    <property type="term" value="F:glycerol kinase activity"/>
    <property type="evidence" value="ECO:0000250"/>
    <property type="project" value="UniProtKB"/>
</dbReference>
<dbReference type="GO" id="GO:0019563">
    <property type="term" value="P:glycerol catabolic process"/>
    <property type="evidence" value="ECO:0007669"/>
    <property type="project" value="UniProtKB-UniRule"/>
</dbReference>
<dbReference type="GO" id="GO:0006071">
    <property type="term" value="P:glycerol metabolic process"/>
    <property type="evidence" value="ECO:0000250"/>
    <property type="project" value="UniProtKB"/>
</dbReference>
<dbReference type="GO" id="GO:0006072">
    <property type="term" value="P:glycerol-3-phosphate metabolic process"/>
    <property type="evidence" value="ECO:0007669"/>
    <property type="project" value="InterPro"/>
</dbReference>
<dbReference type="CDD" id="cd07786">
    <property type="entry name" value="FGGY_EcGK_like"/>
    <property type="match status" value="1"/>
</dbReference>
<dbReference type="FunFam" id="3.30.420.40:FF:000007">
    <property type="entry name" value="Glycerol kinase"/>
    <property type="match status" value="1"/>
</dbReference>
<dbReference type="FunFam" id="3.30.420.40:FF:000008">
    <property type="entry name" value="Glycerol kinase"/>
    <property type="match status" value="1"/>
</dbReference>
<dbReference type="Gene3D" id="3.30.420.40">
    <property type="match status" value="2"/>
</dbReference>
<dbReference type="HAMAP" id="MF_00186">
    <property type="entry name" value="Glycerol_kin"/>
    <property type="match status" value="1"/>
</dbReference>
<dbReference type="InterPro" id="IPR043129">
    <property type="entry name" value="ATPase_NBD"/>
</dbReference>
<dbReference type="InterPro" id="IPR000577">
    <property type="entry name" value="Carb_kinase_FGGY"/>
</dbReference>
<dbReference type="InterPro" id="IPR018483">
    <property type="entry name" value="Carb_kinase_FGGY_CS"/>
</dbReference>
<dbReference type="InterPro" id="IPR018485">
    <property type="entry name" value="FGGY_C"/>
</dbReference>
<dbReference type="InterPro" id="IPR018484">
    <property type="entry name" value="FGGY_N"/>
</dbReference>
<dbReference type="InterPro" id="IPR005999">
    <property type="entry name" value="Glycerol_kin"/>
</dbReference>
<dbReference type="NCBIfam" id="TIGR01311">
    <property type="entry name" value="glycerol_kin"/>
    <property type="match status" value="1"/>
</dbReference>
<dbReference type="NCBIfam" id="NF000756">
    <property type="entry name" value="PRK00047.1"/>
    <property type="match status" value="1"/>
</dbReference>
<dbReference type="PANTHER" id="PTHR10196:SF69">
    <property type="entry name" value="GLYCEROL KINASE"/>
    <property type="match status" value="1"/>
</dbReference>
<dbReference type="PANTHER" id="PTHR10196">
    <property type="entry name" value="SUGAR KINASE"/>
    <property type="match status" value="1"/>
</dbReference>
<dbReference type="Pfam" id="PF02782">
    <property type="entry name" value="FGGY_C"/>
    <property type="match status" value="1"/>
</dbReference>
<dbReference type="Pfam" id="PF00370">
    <property type="entry name" value="FGGY_N"/>
    <property type="match status" value="1"/>
</dbReference>
<dbReference type="PIRSF" id="PIRSF000538">
    <property type="entry name" value="GlpK"/>
    <property type="match status" value="1"/>
</dbReference>
<dbReference type="SUPFAM" id="SSF53067">
    <property type="entry name" value="Actin-like ATPase domain"/>
    <property type="match status" value="2"/>
</dbReference>
<dbReference type="PROSITE" id="PS00933">
    <property type="entry name" value="FGGY_KINASES_1"/>
    <property type="match status" value="1"/>
</dbReference>
<dbReference type="PROSITE" id="PS00445">
    <property type="entry name" value="FGGY_KINASES_2"/>
    <property type="match status" value="1"/>
</dbReference>
<gene>
    <name evidence="1" type="primary">glpK</name>
    <name type="ordered locus">NTHI0813</name>
</gene>
<proteinExistence type="inferred from homology"/>
<evidence type="ECO:0000255" key="1">
    <source>
        <dbReference type="HAMAP-Rule" id="MF_00186"/>
    </source>
</evidence>
<keyword id="KW-0067">ATP-binding</keyword>
<keyword id="KW-0319">Glycerol metabolism</keyword>
<keyword id="KW-0418">Kinase</keyword>
<keyword id="KW-0547">Nucleotide-binding</keyword>
<keyword id="KW-0808">Transferase</keyword>
<name>GLPK_HAEI8</name>